<proteinExistence type="inferred from homology"/>
<dbReference type="EC" id="3.2.2.23" evidence="2"/>
<dbReference type="EC" id="4.2.99.18" evidence="2"/>
<dbReference type="EMBL" id="CP000875">
    <property type="protein sequence ID" value="ABX03842.1"/>
    <property type="molecule type" value="Genomic_DNA"/>
</dbReference>
<dbReference type="SMR" id="A9B0X2"/>
<dbReference type="FunCoup" id="A9B0X2">
    <property type="interactions" value="343"/>
</dbReference>
<dbReference type="STRING" id="316274.Haur_1194"/>
<dbReference type="KEGG" id="hau:Haur_1194"/>
<dbReference type="eggNOG" id="COG0266">
    <property type="taxonomic scope" value="Bacteria"/>
</dbReference>
<dbReference type="HOGENOM" id="CLU_038423_1_2_0"/>
<dbReference type="InParanoid" id="A9B0X2"/>
<dbReference type="Proteomes" id="UP000000787">
    <property type="component" value="Chromosome"/>
</dbReference>
<dbReference type="GO" id="GO:0034039">
    <property type="term" value="F:8-oxo-7,8-dihydroguanine DNA N-glycosylase activity"/>
    <property type="evidence" value="ECO:0007669"/>
    <property type="project" value="TreeGrafter"/>
</dbReference>
<dbReference type="GO" id="GO:0140078">
    <property type="term" value="F:class I DNA-(apurinic or apyrimidinic site) endonuclease activity"/>
    <property type="evidence" value="ECO:0007669"/>
    <property type="project" value="UniProtKB-EC"/>
</dbReference>
<dbReference type="GO" id="GO:0003684">
    <property type="term" value="F:damaged DNA binding"/>
    <property type="evidence" value="ECO:0007669"/>
    <property type="project" value="InterPro"/>
</dbReference>
<dbReference type="GO" id="GO:0008270">
    <property type="term" value="F:zinc ion binding"/>
    <property type="evidence" value="ECO:0007669"/>
    <property type="project" value="UniProtKB-UniRule"/>
</dbReference>
<dbReference type="GO" id="GO:0006284">
    <property type="term" value="P:base-excision repair"/>
    <property type="evidence" value="ECO:0007669"/>
    <property type="project" value="InterPro"/>
</dbReference>
<dbReference type="CDD" id="cd08966">
    <property type="entry name" value="EcFpg-like_N"/>
    <property type="match status" value="1"/>
</dbReference>
<dbReference type="FunFam" id="1.10.8.50:FF:000003">
    <property type="entry name" value="Formamidopyrimidine-DNA glycosylase"/>
    <property type="match status" value="1"/>
</dbReference>
<dbReference type="Gene3D" id="1.10.8.50">
    <property type="match status" value="1"/>
</dbReference>
<dbReference type="Gene3D" id="3.20.190.10">
    <property type="entry name" value="MutM-like, N-terminal"/>
    <property type="match status" value="1"/>
</dbReference>
<dbReference type="HAMAP" id="MF_00103">
    <property type="entry name" value="Fapy_DNA_glycosyl"/>
    <property type="match status" value="1"/>
</dbReference>
<dbReference type="InterPro" id="IPR015886">
    <property type="entry name" value="DNA_glyclase/AP_lyase_DNA-bd"/>
</dbReference>
<dbReference type="InterPro" id="IPR015887">
    <property type="entry name" value="DNA_glyclase_Znf_dom_DNA_BS"/>
</dbReference>
<dbReference type="InterPro" id="IPR020629">
    <property type="entry name" value="Formamido-pyr_DNA_Glyclase"/>
</dbReference>
<dbReference type="InterPro" id="IPR012319">
    <property type="entry name" value="FPG_cat"/>
</dbReference>
<dbReference type="InterPro" id="IPR035937">
    <property type="entry name" value="MutM-like_N-ter"/>
</dbReference>
<dbReference type="InterPro" id="IPR010979">
    <property type="entry name" value="Ribosomal_uS13-like_H2TH"/>
</dbReference>
<dbReference type="InterPro" id="IPR000214">
    <property type="entry name" value="Znf_DNA_glyclase/AP_lyase"/>
</dbReference>
<dbReference type="InterPro" id="IPR010663">
    <property type="entry name" value="Znf_FPG/IleRS"/>
</dbReference>
<dbReference type="NCBIfam" id="TIGR00577">
    <property type="entry name" value="fpg"/>
    <property type="match status" value="1"/>
</dbReference>
<dbReference type="NCBIfam" id="NF002211">
    <property type="entry name" value="PRK01103.1"/>
    <property type="match status" value="1"/>
</dbReference>
<dbReference type="PANTHER" id="PTHR22993">
    <property type="entry name" value="FORMAMIDOPYRIMIDINE-DNA GLYCOSYLASE"/>
    <property type="match status" value="1"/>
</dbReference>
<dbReference type="PANTHER" id="PTHR22993:SF9">
    <property type="entry name" value="FORMAMIDOPYRIMIDINE-DNA GLYCOSYLASE"/>
    <property type="match status" value="1"/>
</dbReference>
<dbReference type="Pfam" id="PF01149">
    <property type="entry name" value="Fapy_DNA_glyco"/>
    <property type="match status" value="1"/>
</dbReference>
<dbReference type="Pfam" id="PF06831">
    <property type="entry name" value="H2TH"/>
    <property type="match status" value="1"/>
</dbReference>
<dbReference type="Pfam" id="PF06827">
    <property type="entry name" value="zf-FPG_IleRS"/>
    <property type="match status" value="1"/>
</dbReference>
<dbReference type="SMART" id="SM00898">
    <property type="entry name" value="Fapy_DNA_glyco"/>
    <property type="match status" value="1"/>
</dbReference>
<dbReference type="SMART" id="SM01232">
    <property type="entry name" value="H2TH"/>
    <property type="match status" value="1"/>
</dbReference>
<dbReference type="SUPFAM" id="SSF57716">
    <property type="entry name" value="Glucocorticoid receptor-like (DNA-binding domain)"/>
    <property type="match status" value="1"/>
</dbReference>
<dbReference type="SUPFAM" id="SSF81624">
    <property type="entry name" value="N-terminal domain of MutM-like DNA repair proteins"/>
    <property type="match status" value="1"/>
</dbReference>
<dbReference type="SUPFAM" id="SSF46946">
    <property type="entry name" value="S13-like H2TH domain"/>
    <property type="match status" value="1"/>
</dbReference>
<dbReference type="PROSITE" id="PS51068">
    <property type="entry name" value="FPG_CAT"/>
    <property type="match status" value="1"/>
</dbReference>
<dbReference type="PROSITE" id="PS01242">
    <property type="entry name" value="ZF_FPG_1"/>
    <property type="match status" value="1"/>
</dbReference>
<dbReference type="PROSITE" id="PS51066">
    <property type="entry name" value="ZF_FPG_2"/>
    <property type="match status" value="1"/>
</dbReference>
<reference key="1">
    <citation type="journal article" date="2011" name="Stand. Genomic Sci.">
        <title>Complete genome sequence of the filamentous gliding predatory bacterium Herpetosiphon aurantiacus type strain (114-95(T)).</title>
        <authorList>
            <person name="Kiss H."/>
            <person name="Nett M."/>
            <person name="Domin N."/>
            <person name="Martin K."/>
            <person name="Maresca J.A."/>
            <person name="Copeland A."/>
            <person name="Lapidus A."/>
            <person name="Lucas S."/>
            <person name="Berry K.W."/>
            <person name="Glavina Del Rio T."/>
            <person name="Dalin E."/>
            <person name="Tice H."/>
            <person name="Pitluck S."/>
            <person name="Richardson P."/>
            <person name="Bruce D."/>
            <person name="Goodwin L."/>
            <person name="Han C."/>
            <person name="Detter J.C."/>
            <person name="Schmutz J."/>
            <person name="Brettin T."/>
            <person name="Land M."/>
            <person name="Hauser L."/>
            <person name="Kyrpides N.C."/>
            <person name="Ivanova N."/>
            <person name="Goeker M."/>
            <person name="Woyke T."/>
            <person name="Klenk H.P."/>
            <person name="Bryant D.A."/>
        </authorList>
    </citation>
    <scope>NUCLEOTIDE SEQUENCE [LARGE SCALE GENOMIC DNA]</scope>
    <source>
        <strain>ATCC 23779 / DSM 785 / 114-95</strain>
    </source>
</reference>
<accession>A9B0X2</accession>
<keyword id="KW-0227">DNA damage</keyword>
<keyword id="KW-0234">DNA repair</keyword>
<keyword id="KW-0238">DNA-binding</keyword>
<keyword id="KW-0326">Glycosidase</keyword>
<keyword id="KW-0378">Hydrolase</keyword>
<keyword id="KW-0456">Lyase</keyword>
<keyword id="KW-0479">Metal-binding</keyword>
<keyword id="KW-0511">Multifunctional enzyme</keyword>
<keyword id="KW-0862">Zinc</keyword>
<keyword id="KW-0863">Zinc-finger</keyword>
<organism>
    <name type="scientific">Herpetosiphon aurantiacus (strain ATCC 23779 / DSM 785 / 114-95)</name>
    <dbReference type="NCBI Taxonomy" id="316274"/>
    <lineage>
        <taxon>Bacteria</taxon>
        <taxon>Bacillati</taxon>
        <taxon>Chloroflexota</taxon>
        <taxon>Chloroflexia</taxon>
        <taxon>Herpetosiphonales</taxon>
        <taxon>Herpetosiphonaceae</taxon>
        <taxon>Herpetosiphon</taxon>
    </lineage>
</organism>
<evidence type="ECO:0000250" key="1"/>
<evidence type="ECO:0000255" key="2">
    <source>
        <dbReference type="HAMAP-Rule" id="MF_00103"/>
    </source>
</evidence>
<comment type="function">
    <text evidence="2">Involved in base excision repair of DNA damaged by oxidation or by mutagenic agents. Acts as a DNA glycosylase that recognizes and removes damaged bases. Has a preference for oxidized purines, such as 7,8-dihydro-8-oxoguanine (8-oxoG). Has AP (apurinic/apyrimidinic) lyase activity and introduces nicks in the DNA strand. Cleaves the DNA backbone by beta-delta elimination to generate a single-strand break at the site of the removed base with both 3'- and 5'-phosphates.</text>
</comment>
<comment type="catalytic activity">
    <reaction evidence="2">
        <text>Hydrolysis of DNA containing ring-opened 7-methylguanine residues, releasing 2,6-diamino-4-hydroxy-5-(N-methyl)formamidopyrimidine.</text>
        <dbReference type="EC" id="3.2.2.23"/>
    </reaction>
</comment>
<comment type="catalytic activity">
    <reaction evidence="2">
        <text>2'-deoxyribonucleotide-(2'-deoxyribose 5'-phosphate)-2'-deoxyribonucleotide-DNA = a 3'-end 2'-deoxyribonucleotide-(2,3-dehydro-2,3-deoxyribose 5'-phosphate)-DNA + a 5'-end 5'-phospho-2'-deoxyribonucleoside-DNA + H(+)</text>
        <dbReference type="Rhea" id="RHEA:66592"/>
        <dbReference type="Rhea" id="RHEA-COMP:13180"/>
        <dbReference type="Rhea" id="RHEA-COMP:16897"/>
        <dbReference type="Rhea" id="RHEA-COMP:17067"/>
        <dbReference type="ChEBI" id="CHEBI:15378"/>
        <dbReference type="ChEBI" id="CHEBI:136412"/>
        <dbReference type="ChEBI" id="CHEBI:157695"/>
        <dbReference type="ChEBI" id="CHEBI:167181"/>
        <dbReference type="EC" id="4.2.99.18"/>
    </reaction>
</comment>
<comment type="cofactor">
    <cofactor evidence="2">
        <name>Zn(2+)</name>
        <dbReference type="ChEBI" id="CHEBI:29105"/>
    </cofactor>
    <text evidence="2">Binds 1 zinc ion per subunit.</text>
</comment>
<comment type="subunit">
    <text evidence="2">Monomer.</text>
</comment>
<comment type="similarity">
    <text evidence="2">Belongs to the FPG family.</text>
</comment>
<name>FPG_HERA2</name>
<protein>
    <recommendedName>
        <fullName evidence="2">Formamidopyrimidine-DNA glycosylase</fullName>
        <shortName evidence="2">Fapy-DNA glycosylase</shortName>
        <ecNumber evidence="2">3.2.2.23</ecNumber>
    </recommendedName>
    <alternativeName>
        <fullName evidence="2">DNA-(apurinic or apyrimidinic site) lyase MutM</fullName>
        <shortName evidence="2">AP lyase MutM</shortName>
        <ecNumber evidence="2">4.2.99.18</ecNumber>
    </alternativeName>
</protein>
<sequence>MPELPEVETVRRSLEQELVGRYFVALRSLGWPKIVDTHSPELFAEAIAQRQIQQVQRRAKYLLIELDNHETLIVHLRMTGQMLVVAADEPADRHTHVVVALDNGRELRFHDPRKFGRWSLVDRSGVAALNQRLGPEPLGDDFTLDDFAQRLSRKATKIKPTLLDQSVLAGVGNIYADEALWLAKIHPLRSANSLNANEIAELFEAIKTVLRNSIEHRGTTLVNYRDAYGASGENQYHLEAYGRTGEPCRRCGTPIERIVVAQRSTHICPVCQA</sequence>
<gene>
    <name evidence="2" type="primary">mutM</name>
    <name evidence="2" type="synonym">fpg</name>
    <name type="ordered locus">Haur_1194</name>
</gene>
<feature type="initiator methionine" description="Removed" evidence="1">
    <location>
        <position position="1"/>
    </location>
</feature>
<feature type="chain" id="PRO_1000094049" description="Formamidopyrimidine-DNA glycosylase">
    <location>
        <begin position="2"/>
        <end position="273"/>
    </location>
</feature>
<feature type="zinc finger region" description="FPG-type" evidence="2">
    <location>
        <begin position="239"/>
        <end position="273"/>
    </location>
</feature>
<feature type="active site" description="Schiff-base intermediate with DNA" evidence="2">
    <location>
        <position position="2"/>
    </location>
</feature>
<feature type="active site" description="Proton donor" evidence="2">
    <location>
        <position position="3"/>
    </location>
</feature>
<feature type="active site" description="Proton donor; for beta-elimination activity" evidence="2">
    <location>
        <position position="60"/>
    </location>
</feature>
<feature type="active site" description="Proton donor; for delta-elimination activity" evidence="2">
    <location>
        <position position="263"/>
    </location>
</feature>
<feature type="binding site" evidence="2">
    <location>
        <position position="94"/>
    </location>
    <ligand>
        <name>DNA</name>
        <dbReference type="ChEBI" id="CHEBI:16991"/>
    </ligand>
</feature>
<feature type="binding site" evidence="2">
    <location>
        <position position="113"/>
    </location>
    <ligand>
        <name>DNA</name>
        <dbReference type="ChEBI" id="CHEBI:16991"/>
    </ligand>
</feature>
<feature type="binding site" evidence="2">
    <location>
        <position position="154"/>
    </location>
    <ligand>
        <name>DNA</name>
        <dbReference type="ChEBI" id="CHEBI:16991"/>
    </ligand>
</feature>